<organism>
    <name type="scientific">Aspergillus terreus (strain NIH 2624 / FGSC A1156)</name>
    <dbReference type="NCBI Taxonomy" id="341663"/>
    <lineage>
        <taxon>Eukaryota</taxon>
        <taxon>Fungi</taxon>
        <taxon>Dikarya</taxon>
        <taxon>Ascomycota</taxon>
        <taxon>Pezizomycotina</taxon>
        <taxon>Eurotiomycetes</taxon>
        <taxon>Eurotiomycetidae</taxon>
        <taxon>Eurotiales</taxon>
        <taxon>Aspergillaceae</taxon>
        <taxon>Aspergillus</taxon>
        <taxon>Aspergillus subgen. Circumdati</taxon>
    </lineage>
</organism>
<keyword id="KW-0963">Cytoplasm</keyword>
<keyword id="KW-0539">Nucleus</keyword>
<keyword id="KW-1185">Reference proteome</keyword>
<accession>Q0CX45</accession>
<protein>
    <recommendedName>
        <fullName>Protein yae1</fullName>
    </recommendedName>
</protein>
<reference key="1">
    <citation type="submission" date="2005-09" db="EMBL/GenBank/DDBJ databases">
        <title>Annotation of the Aspergillus terreus NIH2624 genome.</title>
        <authorList>
            <person name="Birren B.W."/>
            <person name="Lander E.S."/>
            <person name="Galagan J.E."/>
            <person name="Nusbaum C."/>
            <person name="Devon K."/>
            <person name="Henn M."/>
            <person name="Ma L.-J."/>
            <person name="Jaffe D.B."/>
            <person name="Butler J."/>
            <person name="Alvarez P."/>
            <person name="Gnerre S."/>
            <person name="Grabherr M."/>
            <person name="Kleber M."/>
            <person name="Mauceli E.W."/>
            <person name="Brockman W."/>
            <person name="Rounsley S."/>
            <person name="Young S.K."/>
            <person name="LaButti K."/>
            <person name="Pushparaj V."/>
            <person name="DeCaprio D."/>
            <person name="Crawford M."/>
            <person name="Koehrsen M."/>
            <person name="Engels R."/>
            <person name="Montgomery P."/>
            <person name="Pearson M."/>
            <person name="Howarth C."/>
            <person name="Larson L."/>
            <person name="Luoma S."/>
            <person name="White J."/>
            <person name="Alvarado L."/>
            <person name="Kodira C.D."/>
            <person name="Zeng Q."/>
            <person name="Oleary S."/>
            <person name="Yandava C."/>
            <person name="Denning D.W."/>
            <person name="Nierman W.C."/>
            <person name="Milne T."/>
            <person name="Madden K."/>
        </authorList>
    </citation>
    <scope>NUCLEOTIDE SEQUENCE [LARGE SCALE GENOMIC DNA]</scope>
    <source>
        <strain>NIH 2624 / FGSC A1156</strain>
    </source>
</reference>
<gene>
    <name type="primary">yae1</name>
    <name type="ORF">ATEG_01739</name>
</gene>
<sequence length="220" mass="22958">MDNSLDDIFGSSPPHETAHPIAPPSNPSPSNPAEPSELPSLRRQHVTAGYRDGISASKGEHVQAGFDAGFPVGAQLGMRAGTVLGILEGVLRGYESRTSSVVKKPARTAAGGATKSENPNEADAEARNAKRAEILTLYQQALKDLDVQAVFAGLQGAEGEKPETQLGRKGDVAVSGWEKRVLVAHWEENMEALEAKDDGEGEGAAEEGEASKAAPAPALS</sequence>
<comment type="function">
    <text evidence="2">The complex LTO1:YAE1 may function as a target specific adapter that probably recruits apo-RPLI1 to the cytosolic iron-sulfur protein assembly (CIA) complex machinery. May be required for biogenesis of the large ribosomal subunit and initiation of translation.</text>
</comment>
<comment type="subunit">
    <text evidence="2">May form a complex with LTO1.</text>
</comment>
<comment type="subcellular location">
    <subcellularLocation>
        <location evidence="1">Cytoplasm</location>
    </subcellularLocation>
    <subcellularLocation>
        <location evidence="1">Nucleus</location>
    </subcellularLocation>
</comment>
<comment type="similarity">
    <text evidence="4">Belongs to the YAE1 family.</text>
</comment>
<evidence type="ECO:0000250" key="1">
    <source>
        <dbReference type="UniProtKB" id="P47118"/>
    </source>
</evidence>
<evidence type="ECO:0000250" key="2">
    <source>
        <dbReference type="UniProtKB" id="Q9NRH1"/>
    </source>
</evidence>
<evidence type="ECO:0000256" key="3">
    <source>
        <dbReference type="SAM" id="MobiDB-lite"/>
    </source>
</evidence>
<evidence type="ECO:0000305" key="4"/>
<name>YAE1_ASPTN</name>
<feature type="chain" id="PRO_0000324421" description="Protein yae1">
    <location>
        <begin position="1"/>
        <end position="220"/>
    </location>
</feature>
<feature type="region of interest" description="Disordered" evidence="3">
    <location>
        <begin position="1"/>
        <end position="54"/>
    </location>
</feature>
<feature type="region of interest" description="deca-GX3 motif; required for interaction with LTO1" evidence="1">
    <location>
        <begin position="49"/>
        <end position="89"/>
    </location>
</feature>
<feature type="region of interest" description="Disordered" evidence="3">
    <location>
        <begin position="102"/>
        <end position="126"/>
    </location>
</feature>
<feature type="region of interest" description="Disordered" evidence="3">
    <location>
        <begin position="194"/>
        <end position="220"/>
    </location>
</feature>
<feature type="compositionally biased region" description="Pro residues" evidence="3">
    <location>
        <begin position="21"/>
        <end position="32"/>
    </location>
</feature>
<feature type="compositionally biased region" description="Acidic residues" evidence="3">
    <location>
        <begin position="199"/>
        <end position="208"/>
    </location>
</feature>
<feature type="compositionally biased region" description="Low complexity" evidence="3">
    <location>
        <begin position="211"/>
        <end position="220"/>
    </location>
</feature>
<dbReference type="EMBL" id="CH476595">
    <property type="protein sequence ID" value="EAU38496.1"/>
    <property type="molecule type" value="Genomic_DNA"/>
</dbReference>
<dbReference type="RefSeq" id="XP_001209104.1">
    <property type="nucleotide sequence ID" value="XM_001209104.1"/>
</dbReference>
<dbReference type="STRING" id="341663.Q0CX45"/>
<dbReference type="EnsemblFungi" id="EAU38496">
    <property type="protein sequence ID" value="EAU38496"/>
    <property type="gene ID" value="ATEG_01739"/>
</dbReference>
<dbReference type="GeneID" id="4316370"/>
<dbReference type="VEuPathDB" id="FungiDB:ATEG_01739"/>
<dbReference type="eggNOG" id="KOG4774">
    <property type="taxonomic scope" value="Eukaryota"/>
</dbReference>
<dbReference type="HOGENOM" id="CLU_066684_1_1_1"/>
<dbReference type="OMA" id="AHVQEGF"/>
<dbReference type="OrthoDB" id="20086at2759"/>
<dbReference type="Proteomes" id="UP000007963">
    <property type="component" value="Unassembled WGS sequence"/>
</dbReference>
<dbReference type="GO" id="GO:0005737">
    <property type="term" value="C:cytoplasm"/>
    <property type="evidence" value="ECO:0007669"/>
    <property type="project" value="UniProtKB-SubCell"/>
</dbReference>
<dbReference type="GO" id="GO:0005634">
    <property type="term" value="C:nucleus"/>
    <property type="evidence" value="ECO:0007669"/>
    <property type="project" value="UniProtKB-SubCell"/>
</dbReference>
<dbReference type="GO" id="GO:0051604">
    <property type="term" value="P:protein maturation"/>
    <property type="evidence" value="ECO:0000250"/>
    <property type="project" value="UniProtKB"/>
</dbReference>
<dbReference type="InterPro" id="IPR019191">
    <property type="entry name" value="Essential_protein_Yae1_N"/>
</dbReference>
<dbReference type="InterPro" id="IPR038881">
    <property type="entry name" value="Yae1-like"/>
</dbReference>
<dbReference type="PANTHER" id="PTHR18829">
    <property type="entry name" value="PROTEIN YAE1 HOMOLOG"/>
    <property type="match status" value="1"/>
</dbReference>
<dbReference type="PANTHER" id="PTHR18829:SF0">
    <property type="entry name" value="PROTEIN YAE1 HOMOLOG"/>
    <property type="match status" value="1"/>
</dbReference>
<dbReference type="Pfam" id="PF09811">
    <property type="entry name" value="Yae1_N"/>
    <property type="match status" value="1"/>
</dbReference>
<proteinExistence type="inferred from homology"/>